<gene>
    <name evidence="1" type="primary">hemA</name>
    <name type="ordered locus">SSO0180</name>
</gene>
<reference key="1">
    <citation type="journal article" date="2001" name="Proc. Natl. Acad. Sci. U.S.A.">
        <title>The complete genome of the crenarchaeon Sulfolobus solfataricus P2.</title>
        <authorList>
            <person name="She Q."/>
            <person name="Singh R.K."/>
            <person name="Confalonieri F."/>
            <person name="Zivanovic Y."/>
            <person name="Allard G."/>
            <person name="Awayez M.J."/>
            <person name="Chan-Weiher C.C.-Y."/>
            <person name="Clausen I.G."/>
            <person name="Curtis B.A."/>
            <person name="De Moors A."/>
            <person name="Erauso G."/>
            <person name="Fletcher C."/>
            <person name="Gordon P.M.K."/>
            <person name="Heikamp-de Jong I."/>
            <person name="Jeffries A.C."/>
            <person name="Kozera C.J."/>
            <person name="Medina N."/>
            <person name="Peng X."/>
            <person name="Thi-Ngoc H.P."/>
            <person name="Redder P."/>
            <person name="Schenk M.E."/>
            <person name="Theriault C."/>
            <person name="Tolstrup N."/>
            <person name="Charlebois R.L."/>
            <person name="Doolittle W.F."/>
            <person name="Duguet M."/>
            <person name="Gaasterland T."/>
            <person name="Garrett R.A."/>
            <person name="Ragan M.A."/>
            <person name="Sensen C.W."/>
            <person name="Van der Oost J."/>
        </authorList>
    </citation>
    <scope>NUCLEOTIDE SEQUENCE [LARGE SCALE GENOMIC DNA]</scope>
    <source>
        <strain>ATCC 35092 / DSM 1617 / JCM 11322 / P2</strain>
    </source>
</reference>
<organism>
    <name type="scientific">Saccharolobus solfataricus (strain ATCC 35092 / DSM 1617 / JCM 11322 / P2)</name>
    <name type="common">Sulfolobus solfataricus</name>
    <dbReference type="NCBI Taxonomy" id="273057"/>
    <lineage>
        <taxon>Archaea</taxon>
        <taxon>Thermoproteota</taxon>
        <taxon>Thermoprotei</taxon>
        <taxon>Sulfolobales</taxon>
        <taxon>Sulfolobaceae</taxon>
        <taxon>Saccharolobus</taxon>
    </lineage>
</organism>
<evidence type="ECO:0000255" key="1">
    <source>
        <dbReference type="HAMAP-Rule" id="MF_00087"/>
    </source>
</evidence>
<name>HEM1_SACS2</name>
<keyword id="KW-0521">NADP</keyword>
<keyword id="KW-0560">Oxidoreductase</keyword>
<keyword id="KW-0627">Porphyrin biosynthesis</keyword>
<keyword id="KW-1185">Reference proteome</keyword>
<feature type="chain" id="PRO_0000114110" description="Glutamyl-tRNA reductase">
    <location>
        <begin position="1"/>
        <end position="426"/>
    </location>
</feature>
<feature type="active site" description="Nucleophile" evidence="1">
    <location>
        <position position="53"/>
    </location>
</feature>
<feature type="binding site" evidence="1">
    <location>
        <begin position="52"/>
        <end position="55"/>
    </location>
    <ligand>
        <name>substrate</name>
    </ligand>
</feature>
<feature type="binding site" evidence="1">
    <location>
        <position position="110"/>
    </location>
    <ligand>
        <name>substrate</name>
    </ligand>
</feature>
<feature type="binding site" evidence="1">
    <location>
        <begin position="115"/>
        <end position="117"/>
    </location>
    <ligand>
        <name>substrate</name>
    </ligand>
</feature>
<feature type="binding site" evidence="1">
    <location>
        <position position="121"/>
    </location>
    <ligand>
        <name>substrate</name>
    </ligand>
</feature>
<feature type="binding site" evidence="1">
    <location>
        <begin position="190"/>
        <end position="195"/>
    </location>
    <ligand>
        <name>NADP(+)</name>
        <dbReference type="ChEBI" id="CHEBI:58349"/>
    </ligand>
</feature>
<feature type="site" description="Important for activity" evidence="1">
    <location>
        <position position="100"/>
    </location>
</feature>
<protein>
    <recommendedName>
        <fullName evidence="1">Glutamyl-tRNA reductase</fullName>
        <shortName evidence="1">GluTR</shortName>
        <ecNumber evidence="1">1.2.1.70</ecNumber>
    </recommendedName>
</protein>
<sequence length="426" mass="49422">MSKDEELLQNYCSILFTYKTIGISNLHLYYFRETEIKSLKQLINAEFAILQTCNRVEIYLYSDTNTLKEVNKIIQYLNNIHNEPIGNQARVLCGKDAAKHLFLVASGADSLSIGEYEILSQIRSTIDMFKKLGFSGKYLQIFFERAIKVGRKVREETSISKGKVGIYSLAIDEAKKRFNDFYDRRILVIGAGEMAQKITSMLHNEGAKDVTIMNRTIEKAKQLALKFGYNYEKLDLDKLGNFDVAFISIYHENLRLENKWNTLIVDITVPPLFTGNNVITLEELERISNLNFKAREEELAKINKLVEDGINELLYDYKKEIYTEFMSKIMKRIETIRENEILRAYKELEKLGINDQQAKEILDLMTRSIIKKSFQPLFDNIRSLIFNGENSINYINFLIDIFKDGNISGFETEKIKEKQVSERSSI</sequence>
<dbReference type="EC" id="1.2.1.70" evidence="1"/>
<dbReference type="EMBL" id="AE006641">
    <property type="protein sequence ID" value="AAK40526.1"/>
    <property type="molecule type" value="Genomic_DNA"/>
</dbReference>
<dbReference type="PIR" id="G90158">
    <property type="entry name" value="G90158"/>
</dbReference>
<dbReference type="RefSeq" id="WP_009990412.1">
    <property type="nucleotide sequence ID" value="NC_002754.1"/>
</dbReference>
<dbReference type="SMR" id="Q980U7"/>
<dbReference type="FunCoup" id="Q980U7">
    <property type="interactions" value="109"/>
</dbReference>
<dbReference type="STRING" id="273057.SSO0180"/>
<dbReference type="PaxDb" id="273057-SSO0180"/>
<dbReference type="DNASU" id="1455336"/>
<dbReference type="EnsemblBacteria" id="AAK40526">
    <property type="protein sequence ID" value="AAK40526"/>
    <property type="gene ID" value="SSO0180"/>
</dbReference>
<dbReference type="KEGG" id="sso:SSO0180"/>
<dbReference type="PATRIC" id="fig|273057.12.peg.178"/>
<dbReference type="eggNOG" id="arCOG01036">
    <property type="taxonomic scope" value="Archaea"/>
</dbReference>
<dbReference type="HOGENOM" id="CLU_035113_0_0_2"/>
<dbReference type="InParanoid" id="Q980U7"/>
<dbReference type="PhylomeDB" id="Q980U7"/>
<dbReference type="UniPathway" id="UPA00251">
    <property type="reaction ID" value="UER00316"/>
</dbReference>
<dbReference type="Proteomes" id="UP000001974">
    <property type="component" value="Chromosome"/>
</dbReference>
<dbReference type="GO" id="GO:0008883">
    <property type="term" value="F:glutamyl-tRNA reductase activity"/>
    <property type="evidence" value="ECO:0000318"/>
    <property type="project" value="GO_Central"/>
</dbReference>
<dbReference type="GO" id="GO:0050661">
    <property type="term" value="F:NADP binding"/>
    <property type="evidence" value="ECO:0007669"/>
    <property type="project" value="InterPro"/>
</dbReference>
<dbReference type="GO" id="GO:0019353">
    <property type="term" value="P:protoporphyrinogen IX biosynthetic process from glutamate"/>
    <property type="evidence" value="ECO:0000318"/>
    <property type="project" value="GO_Central"/>
</dbReference>
<dbReference type="CDD" id="cd05213">
    <property type="entry name" value="NAD_bind_Glutamyl_tRNA_reduct"/>
    <property type="match status" value="1"/>
</dbReference>
<dbReference type="Gene3D" id="3.30.460.30">
    <property type="entry name" value="Glutamyl-tRNA reductase, N-terminal domain"/>
    <property type="match status" value="1"/>
</dbReference>
<dbReference type="Gene3D" id="3.40.50.720">
    <property type="entry name" value="NAD(P)-binding Rossmann-like Domain"/>
    <property type="match status" value="1"/>
</dbReference>
<dbReference type="HAMAP" id="MF_00087">
    <property type="entry name" value="Glu_tRNA_reductase"/>
    <property type="match status" value="1"/>
</dbReference>
<dbReference type="InterPro" id="IPR000343">
    <property type="entry name" value="4pyrrol_synth_GluRdtase"/>
</dbReference>
<dbReference type="InterPro" id="IPR015896">
    <property type="entry name" value="4pyrrol_synth_GluRdtase_dimer"/>
</dbReference>
<dbReference type="InterPro" id="IPR015895">
    <property type="entry name" value="4pyrrol_synth_GluRdtase_N"/>
</dbReference>
<dbReference type="InterPro" id="IPR018214">
    <property type="entry name" value="GluRdtase_CS"/>
</dbReference>
<dbReference type="InterPro" id="IPR036453">
    <property type="entry name" value="GluRdtase_dimer_dom_sf"/>
</dbReference>
<dbReference type="InterPro" id="IPR036343">
    <property type="entry name" value="GluRdtase_N_sf"/>
</dbReference>
<dbReference type="InterPro" id="IPR036291">
    <property type="entry name" value="NAD(P)-bd_dom_sf"/>
</dbReference>
<dbReference type="InterPro" id="IPR006151">
    <property type="entry name" value="Shikm_DH/Glu-tRNA_Rdtase"/>
</dbReference>
<dbReference type="NCBIfam" id="NF000751">
    <property type="entry name" value="PRK00045.4-1"/>
    <property type="match status" value="1"/>
</dbReference>
<dbReference type="NCBIfam" id="NF000752">
    <property type="entry name" value="PRK00045.4-2"/>
    <property type="match status" value="1"/>
</dbReference>
<dbReference type="PANTHER" id="PTHR43013">
    <property type="entry name" value="GLUTAMYL-TRNA REDUCTASE"/>
    <property type="match status" value="1"/>
</dbReference>
<dbReference type="PANTHER" id="PTHR43013:SF1">
    <property type="entry name" value="GLUTAMYL-TRNA REDUCTASE"/>
    <property type="match status" value="1"/>
</dbReference>
<dbReference type="Pfam" id="PF00745">
    <property type="entry name" value="GlutR_dimer"/>
    <property type="match status" value="1"/>
</dbReference>
<dbReference type="Pfam" id="PF05201">
    <property type="entry name" value="GlutR_N"/>
    <property type="match status" value="1"/>
</dbReference>
<dbReference type="Pfam" id="PF01488">
    <property type="entry name" value="Shikimate_DH"/>
    <property type="match status" value="1"/>
</dbReference>
<dbReference type="PIRSF" id="PIRSF000445">
    <property type="entry name" value="4pyrrol_synth_GluRdtase"/>
    <property type="match status" value="1"/>
</dbReference>
<dbReference type="SUPFAM" id="SSF69742">
    <property type="entry name" value="Glutamyl tRNA-reductase catalytic, N-terminal domain"/>
    <property type="match status" value="1"/>
</dbReference>
<dbReference type="SUPFAM" id="SSF69075">
    <property type="entry name" value="Glutamyl tRNA-reductase dimerization domain"/>
    <property type="match status" value="1"/>
</dbReference>
<dbReference type="SUPFAM" id="SSF51735">
    <property type="entry name" value="NAD(P)-binding Rossmann-fold domains"/>
    <property type="match status" value="1"/>
</dbReference>
<dbReference type="PROSITE" id="PS00747">
    <property type="entry name" value="GLUTR"/>
    <property type="match status" value="1"/>
</dbReference>
<comment type="function">
    <text evidence="1">Catalyzes the NADPH-dependent reduction of glutamyl-tRNA(Glu) to glutamate 1-semialdehyde (GSA).</text>
</comment>
<comment type="catalytic activity">
    <reaction evidence="1">
        <text>(S)-4-amino-5-oxopentanoate + tRNA(Glu) + NADP(+) = L-glutamyl-tRNA(Glu) + NADPH + H(+)</text>
        <dbReference type="Rhea" id="RHEA:12344"/>
        <dbReference type="Rhea" id="RHEA-COMP:9663"/>
        <dbReference type="Rhea" id="RHEA-COMP:9680"/>
        <dbReference type="ChEBI" id="CHEBI:15378"/>
        <dbReference type="ChEBI" id="CHEBI:57501"/>
        <dbReference type="ChEBI" id="CHEBI:57783"/>
        <dbReference type="ChEBI" id="CHEBI:58349"/>
        <dbReference type="ChEBI" id="CHEBI:78442"/>
        <dbReference type="ChEBI" id="CHEBI:78520"/>
        <dbReference type="EC" id="1.2.1.70"/>
    </reaction>
</comment>
<comment type="pathway">
    <text evidence="1">Porphyrin-containing compound metabolism; protoporphyrin-IX biosynthesis; 5-aminolevulinate from L-glutamyl-tRNA(Glu): step 1/2.</text>
</comment>
<comment type="subunit">
    <text evidence="1">Homodimer.</text>
</comment>
<comment type="domain">
    <text evidence="1">Possesses an unusual extended V-shaped dimeric structure with each monomer consisting of three distinct domains arranged along a curved 'spinal' alpha-helix. The N-terminal catalytic domain specifically recognizes the glutamate moiety of the substrate. The second domain is the NADPH-binding domain, and the third C-terminal domain is responsible for dimerization.</text>
</comment>
<comment type="miscellaneous">
    <text evidence="1">During catalysis, the active site Cys acts as a nucleophile attacking the alpha-carbonyl group of tRNA-bound glutamate with the formation of a thioester intermediate between enzyme and glutamate, and the concomitant release of tRNA(Glu). The thioester intermediate is finally reduced by direct hydride transfer from NADPH, to form the product GSA.</text>
</comment>
<comment type="similarity">
    <text evidence="1">Belongs to the glutamyl-tRNA reductase family.</text>
</comment>
<proteinExistence type="inferred from homology"/>
<accession>Q980U7</accession>